<feature type="chain" id="PRO_0000247493" description="DnaJ homolog subfamily C member 14">
    <location>
        <begin position="1"/>
        <end position="702"/>
    </location>
</feature>
<feature type="transmembrane region" description="Helical" evidence="2">
    <location>
        <begin position="250"/>
        <end position="270"/>
    </location>
</feature>
<feature type="transmembrane region" description="Helical" evidence="2">
    <location>
        <begin position="300"/>
        <end position="320"/>
    </location>
</feature>
<feature type="transmembrane region" description="Helical" evidence="2">
    <location>
        <begin position="326"/>
        <end position="346"/>
    </location>
</feature>
<feature type="domain" description="J" evidence="3">
    <location>
        <begin position="443"/>
        <end position="507"/>
    </location>
</feature>
<feature type="region of interest" description="Disordered" evidence="4">
    <location>
        <begin position="1"/>
        <end position="148"/>
    </location>
</feature>
<feature type="region of interest" description="Disordered" evidence="4">
    <location>
        <begin position="165"/>
        <end position="229"/>
    </location>
</feature>
<feature type="region of interest" description="Disordered" evidence="4">
    <location>
        <begin position="658"/>
        <end position="702"/>
    </location>
</feature>
<feature type="compositionally biased region" description="Pro residues" evidence="4">
    <location>
        <begin position="75"/>
        <end position="84"/>
    </location>
</feature>
<feature type="compositionally biased region" description="Acidic residues" evidence="4">
    <location>
        <begin position="88"/>
        <end position="103"/>
    </location>
</feature>
<feature type="compositionally biased region" description="Polar residues" evidence="4">
    <location>
        <begin position="113"/>
        <end position="133"/>
    </location>
</feature>
<feature type="compositionally biased region" description="Acidic residues" evidence="4">
    <location>
        <begin position="165"/>
        <end position="175"/>
    </location>
</feature>
<feature type="compositionally biased region" description="Basic residues" evidence="4">
    <location>
        <begin position="192"/>
        <end position="201"/>
    </location>
</feature>
<feature type="compositionally biased region" description="Basic and acidic residues" evidence="4">
    <location>
        <begin position="202"/>
        <end position="217"/>
    </location>
</feature>
<feature type="compositionally biased region" description="Basic residues" evidence="4">
    <location>
        <begin position="218"/>
        <end position="227"/>
    </location>
</feature>
<feature type="compositionally biased region" description="Low complexity" evidence="4">
    <location>
        <begin position="659"/>
        <end position="676"/>
    </location>
</feature>
<feature type="compositionally biased region" description="Basic residues" evidence="4">
    <location>
        <begin position="690"/>
        <end position="702"/>
    </location>
</feature>
<feature type="sequence conflict" description="In Ref. 1; AAO73451." evidence="6" ref="1">
    <original>D</original>
    <variation>N</variation>
    <location>
        <position position="285"/>
    </location>
</feature>
<feature type="sequence conflict" description="In Ref. 1; AAO73451." evidence="6" ref="1">
    <original>K</original>
    <variation>R</variation>
    <location>
        <position position="460"/>
    </location>
</feature>
<keyword id="KW-0143">Chaperone</keyword>
<keyword id="KW-0256">Endoplasmic reticulum</keyword>
<keyword id="KW-0472">Membrane</keyword>
<keyword id="KW-0653">Protein transport</keyword>
<keyword id="KW-1267">Proteomics identification</keyword>
<keyword id="KW-1185">Reference proteome</keyword>
<keyword id="KW-0812">Transmembrane</keyword>
<keyword id="KW-1133">Transmembrane helix</keyword>
<keyword id="KW-0813">Transport</keyword>
<proteinExistence type="evidence at protein level"/>
<protein>
    <recommendedName>
        <fullName>DnaJ homolog subfamily C member 14</fullName>
    </recommendedName>
    <alternativeName>
        <fullName>DnaJ protein homolog 3</fullName>
    </alternativeName>
    <alternativeName>
        <fullName>Dopamine receptor-interacting protein of 78 kDa</fullName>
        <shortName>DRIP78</shortName>
    </alternativeName>
    <alternativeName>
        <fullName>Human DnaJ protein 3</fullName>
        <shortName>hDj-3</shortName>
    </alternativeName>
</protein>
<reference key="1">
    <citation type="journal article" date="2003" name="J. Hum. Genet.">
        <title>Molecular cloning and characterization of a novel human J-domain protein gene (HDJ3) from the fetal brain.</title>
        <authorList>
            <person name="Chen J."/>
            <person name="Huang Y."/>
            <person name="Wu H."/>
            <person name="Ni X."/>
            <person name="Cheng H."/>
            <person name="Fan J."/>
            <person name="Gu S."/>
            <person name="Gu X."/>
            <person name="Cao G."/>
            <person name="Ying K."/>
            <person name="Mao Y."/>
            <person name="Lu Y."/>
            <person name="Xie Y."/>
        </authorList>
    </citation>
    <scope>NUCLEOTIDE SEQUENCE [MRNA]</scope>
    <scope>TISSUE SPECIFICITY</scope>
    <source>
        <tissue>Fetal brain</tissue>
    </source>
</reference>
<reference key="2">
    <citation type="journal article" date="2007" name="BMC Genomics">
        <title>The full-ORF clone resource of the German cDNA consortium.</title>
        <authorList>
            <person name="Bechtel S."/>
            <person name="Rosenfelder H."/>
            <person name="Duda A."/>
            <person name="Schmidt C.P."/>
            <person name="Ernst U."/>
            <person name="Wellenreuther R."/>
            <person name="Mehrle A."/>
            <person name="Schuster C."/>
            <person name="Bahr A."/>
            <person name="Bloecker H."/>
            <person name="Heubner D."/>
            <person name="Hoerlein A."/>
            <person name="Michel G."/>
            <person name="Wedler H."/>
            <person name="Koehrer K."/>
            <person name="Ottenwaelder B."/>
            <person name="Poustka A."/>
            <person name="Wiemann S."/>
            <person name="Schupp I."/>
        </authorList>
    </citation>
    <scope>NUCLEOTIDE SEQUENCE [LARGE SCALE MRNA]</scope>
</reference>
<reference key="3">
    <citation type="submission" date="2005-07" db="EMBL/GenBank/DDBJ databases">
        <authorList>
            <person name="Mural R.J."/>
            <person name="Istrail S."/>
            <person name="Sutton G.G."/>
            <person name="Florea L."/>
            <person name="Halpern A.L."/>
            <person name="Mobarry C.M."/>
            <person name="Lippert R."/>
            <person name="Walenz B."/>
            <person name="Shatkay H."/>
            <person name="Dew I."/>
            <person name="Miller J.R."/>
            <person name="Flanigan M.J."/>
            <person name="Edwards N.J."/>
            <person name="Bolanos R."/>
            <person name="Fasulo D."/>
            <person name="Halldorsson B.V."/>
            <person name="Hannenhalli S."/>
            <person name="Turner R."/>
            <person name="Yooseph S."/>
            <person name="Lu F."/>
            <person name="Nusskern D.R."/>
            <person name="Shue B.C."/>
            <person name="Zheng X.H."/>
            <person name="Zhong F."/>
            <person name="Delcher A.L."/>
            <person name="Huson D.H."/>
            <person name="Kravitz S.A."/>
            <person name="Mouchard L."/>
            <person name="Reinert K."/>
            <person name="Remington K.A."/>
            <person name="Clark A.G."/>
            <person name="Waterman M.S."/>
            <person name="Eichler E.E."/>
            <person name="Adams M.D."/>
            <person name="Hunkapiller M.W."/>
            <person name="Myers E.W."/>
            <person name="Venter J.C."/>
        </authorList>
    </citation>
    <scope>NUCLEOTIDE SEQUENCE [LARGE SCALE GENOMIC DNA]</scope>
</reference>
<reference key="4">
    <citation type="journal article" date="2004" name="Genome Res.">
        <title>The status, quality, and expansion of the NIH full-length cDNA project: the Mammalian Gene Collection (MGC).</title>
        <authorList>
            <consortium name="The MGC Project Team"/>
        </authorList>
    </citation>
    <scope>NUCLEOTIDE SEQUENCE [LARGE SCALE MRNA]</scope>
    <source>
        <tissue>Brain</tissue>
        <tissue>Skin</tissue>
    </source>
</reference>
<reference key="5">
    <citation type="journal article" date="2004" name="Nat. Genet.">
        <title>Complete sequencing and characterization of 21,243 full-length human cDNAs.</title>
        <authorList>
            <person name="Ota T."/>
            <person name="Suzuki Y."/>
            <person name="Nishikawa T."/>
            <person name="Otsuki T."/>
            <person name="Sugiyama T."/>
            <person name="Irie R."/>
            <person name="Wakamatsu A."/>
            <person name="Hayashi K."/>
            <person name="Sato H."/>
            <person name="Nagai K."/>
            <person name="Kimura K."/>
            <person name="Makita H."/>
            <person name="Sekine M."/>
            <person name="Obayashi M."/>
            <person name="Nishi T."/>
            <person name="Shibahara T."/>
            <person name="Tanaka T."/>
            <person name="Ishii S."/>
            <person name="Yamamoto J."/>
            <person name="Saito K."/>
            <person name="Kawai Y."/>
            <person name="Isono Y."/>
            <person name="Nakamura Y."/>
            <person name="Nagahari K."/>
            <person name="Murakami K."/>
            <person name="Yasuda T."/>
            <person name="Iwayanagi T."/>
            <person name="Wagatsuma M."/>
            <person name="Shiratori A."/>
            <person name="Sudo H."/>
            <person name="Hosoiri T."/>
            <person name="Kaku Y."/>
            <person name="Kodaira H."/>
            <person name="Kondo H."/>
            <person name="Sugawara M."/>
            <person name="Takahashi M."/>
            <person name="Kanda K."/>
            <person name="Yokoi T."/>
            <person name="Furuya T."/>
            <person name="Kikkawa E."/>
            <person name="Omura Y."/>
            <person name="Abe K."/>
            <person name="Kamihara K."/>
            <person name="Katsuta N."/>
            <person name="Sato K."/>
            <person name="Tanikawa M."/>
            <person name="Yamazaki M."/>
            <person name="Ninomiya K."/>
            <person name="Ishibashi T."/>
            <person name="Yamashita H."/>
            <person name="Murakawa K."/>
            <person name="Fujimori K."/>
            <person name="Tanai H."/>
            <person name="Kimata M."/>
            <person name="Watanabe M."/>
            <person name="Hiraoka S."/>
            <person name="Chiba Y."/>
            <person name="Ishida S."/>
            <person name="Ono Y."/>
            <person name="Takiguchi S."/>
            <person name="Watanabe S."/>
            <person name="Yosida M."/>
            <person name="Hotuta T."/>
            <person name="Kusano J."/>
            <person name="Kanehori K."/>
            <person name="Takahashi-Fujii A."/>
            <person name="Hara H."/>
            <person name="Tanase T.-O."/>
            <person name="Nomura Y."/>
            <person name="Togiya S."/>
            <person name="Komai F."/>
            <person name="Hara R."/>
            <person name="Takeuchi K."/>
            <person name="Arita M."/>
            <person name="Imose N."/>
            <person name="Musashino K."/>
            <person name="Yuuki H."/>
            <person name="Oshima A."/>
            <person name="Sasaki N."/>
            <person name="Aotsuka S."/>
            <person name="Yoshikawa Y."/>
            <person name="Matsunawa H."/>
            <person name="Ichihara T."/>
            <person name="Shiohata N."/>
            <person name="Sano S."/>
            <person name="Moriya S."/>
            <person name="Momiyama H."/>
            <person name="Satoh N."/>
            <person name="Takami S."/>
            <person name="Terashima Y."/>
            <person name="Suzuki O."/>
            <person name="Nakagawa S."/>
            <person name="Senoh A."/>
            <person name="Mizoguchi H."/>
            <person name="Goto Y."/>
            <person name="Shimizu F."/>
            <person name="Wakebe H."/>
            <person name="Hishigaki H."/>
            <person name="Watanabe T."/>
            <person name="Sugiyama A."/>
            <person name="Takemoto M."/>
            <person name="Kawakami B."/>
            <person name="Yamazaki M."/>
            <person name="Watanabe K."/>
            <person name="Kumagai A."/>
            <person name="Itakura S."/>
            <person name="Fukuzumi Y."/>
            <person name="Fujimori Y."/>
            <person name="Komiyama M."/>
            <person name="Tashiro H."/>
            <person name="Tanigami A."/>
            <person name="Fujiwara T."/>
            <person name="Ono T."/>
            <person name="Yamada K."/>
            <person name="Fujii Y."/>
            <person name="Ozaki K."/>
            <person name="Hirao M."/>
            <person name="Ohmori Y."/>
            <person name="Kawabata A."/>
            <person name="Hikiji T."/>
            <person name="Kobatake N."/>
            <person name="Inagaki H."/>
            <person name="Ikema Y."/>
            <person name="Okamoto S."/>
            <person name="Okitani R."/>
            <person name="Kawakami T."/>
            <person name="Noguchi S."/>
            <person name="Itoh T."/>
            <person name="Shigeta K."/>
            <person name="Senba T."/>
            <person name="Matsumura K."/>
            <person name="Nakajima Y."/>
            <person name="Mizuno T."/>
            <person name="Morinaga M."/>
            <person name="Sasaki M."/>
            <person name="Togashi T."/>
            <person name="Oyama M."/>
            <person name="Hata H."/>
            <person name="Watanabe M."/>
            <person name="Komatsu T."/>
            <person name="Mizushima-Sugano J."/>
            <person name="Satoh T."/>
            <person name="Shirai Y."/>
            <person name="Takahashi Y."/>
            <person name="Nakagawa K."/>
            <person name="Okumura K."/>
            <person name="Nagase T."/>
            <person name="Nomura N."/>
            <person name="Kikuchi H."/>
            <person name="Masuho Y."/>
            <person name="Yamashita R."/>
            <person name="Nakai K."/>
            <person name="Yada T."/>
            <person name="Nakamura Y."/>
            <person name="Ohara O."/>
            <person name="Isogai T."/>
            <person name="Sugano S."/>
        </authorList>
    </citation>
    <scope>NUCLEOTIDE SEQUENCE [LARGE SCALE MRNA] OF 254-702</scope>
</reference>
<reference key="6">
    <citation type="journal article" date="2001" name="Nat. Cell Biol.">
        <title>Regulation of transport of the dopamine D1 receptor by a new membrane-associated ER protein.</title>
        <authorList>
            <person name="Bermak J.C."/>
            <person name="Li M."/>
            <person name="Bullock C.M."/>
            <person name="Zhou Q.-Y."/>
        </authorList>
    </citation>
    <scope>NUCLEOTIDE SEQUENCE [MRNA] OF 490-702</scope>
</reference>
<dbReference type="EMBL" id="AY188447">
    <property type="protein sequence ID" value="AAO73451.1"/>
    <property type="molecule type" value="mRNA"/>
</dbReference>
<dbReference type="EMBL" id="EF560741">
    <property type="protein sequence ID" value="ABQ59051.1"/>
    <property type="molecule type" value="mRNA"/>
</dbReference>
<dbReference type="EMBL" id="CH471054">
    <property type="protein sequence ID" value="EAW96833.1"/>
    <property type="molecule type" value="Genomic_DNA"/>
</dbReference>
<dbReference type="EMBL" id="BC080655">
    <property type="protein sequence ID" value="AAH80655.1"/>
    <property type="molecule type" value="mRNA"/>
</dbReference>
<dbReference type="EMBL" id="BC117146">
    <property type="protein sequence ID" value="AAI17147.1"/>
    <property type="molecule type" value="mRNA"/>
</dbReference>
<dbReference type="EMBL" id="BC117148">
    <property type="protein sequence ID" value="AAI17149.1"/>
    <property type="molecule type" value="mRNA"/>
</dbReference>
<dbReference type="EMBL" id="AK055945">
    <property type="protein sequence ID" value="BAB71050.1"/>
    <property type="status" value="ALT_INIT"/>
    <property type="molecule type" value="mRNA"/>
</dbReference>
<dbReference type="EMBL" id="AF351784">
    <property type="protein sequence ID" value="AAK56241.1"/>
    <property type="molecule type" value="mRNA"/>
</dbReference>
<dbReference type="CCDS" id="CCDS8894.1"/>
<dbReference type="RefSeq" id="NP_001381616.1">
    <property type="nucleotide sequence ID" value="NM_001394687.1"/>
</dbReference>
<dbReference type="RefSeq" id="NP_001381617.1">
    <property type="nucleotide sequence ID" value="NM_001394688.1"/>
</dbReference>
<dbReference type="RefSeq" id="NP_001381618.1">
    <property type="nucleotide sequence ID" value="NM_001394689.1"/>
</dbReference>
<dbReference type="RefSeq" id="NP_115740.5">
    <property type="nucleotide sequence ID" value="NM_032364.5"/>
</dbReference>
<dbReference type="SMR" id="Q6Y2X3"/>
<dbReference type="BioGRID" id="124515">
    <property type="interactions" value="52"/>
</dbReference>
<dbReference type="CORUM" id="Q6Y2X3"/>
<dbReference type="FunCoup" id="Q6Y2X3">
    <property type="interactions" value="700"/>
</dbReference>
<dbReference type="IntAct" id="Q6Y2X3">
    <property type="interactions" value="9"/>
</dbReference>
<dbReference type="MINT" id="Q6Y2X3"/>
<dbReference type="STRING" id="9606.ENSP00000350223"/>
<dbReference type="GlyCosmos" id="Q6Y2X3">
    <property type="glycosylation" value="1 site, 1 glycan"/>
</dbReference>
<dbReference type="GlyGen" id="Q6Y2X3">
    <property type="glycosylation" value="1 site, 1 O-linked glycan (1 site)"/>
</dbReference>
<dbReference type="iPTMnet" id="Q6Y2X3"/>
<dbReference type="PhosphoSitePlus" id="Q6Y2X3"/>
<dbReference type="BioMuta" id="DNAJC14"/>
<dbReference type="DMDM" id="110808200"/>
<dbReference type="jPOST" id="Q6Y2X3"/>
<dbReference type="MassIVE" id="Q6Y2X3"/>
<dbReference type="PaxDb" id="9606-ENSP00000350223"/>
<dbReference type="PeptideAtlas" id="Q6Y2X3"/>
<dbReference type="ProteomicsDB" id="67835"/>
<dbReference type="Pumba" id="Q6Y2X3"/>
<dbReference type="Antibodypedia" id="3011">
    <property type="antibodies" value="61 antibodies from 14 providers"/>
</dbReference>
<dbReference type="DNASU" id="85406"/>
<dbReference type="Ensembl" id="ENST00000317287.5">
    <property type="protein sequence ID" value="ENSP00000317500.5"/>
    <property type="gene ID" value="ENSG00000135392.19"/>
</dbReference>
<dbReference type="Ensembl" id="ENST00000357606.7">
    <property type="protein sequence ID" value="ENSP00000350223.3"/>
    <property type="gene ID" value="ENSG00000135392.19"/>
</dbReference>
<dbReference type="Ensembl" id="ENST00000546957.2">
    <property type="protein sequence ID" value="ENSP00000448876.2"/>
    <property type="gene ID" value="ENSG00000135392.19"/>
</dbReference>
<dbReference type="Ensembl" id="ENST00000547445.2">
    <property type="protein sequence ID" value="ENSP00000450196.2"/>
    <property type="gene ID" value="ENSG00000135392.19"/>
</dbReference>
<dbReference type="Ensembl" id="ENST00000678005.2">
    <property type="protein sequence ID" value="ENSP00000504134.1"/>
    <property type="gene ID" value="ENSG00000135392.19"/>
</dbReference>
<dbReference type="GeneID" id="85406"/>
<dbReference type="KEGG" id="hsa:85406"/>
<dbReference type="MANE-Select" id="ENST00000678005.2">
    <property type="protein sequence ID" value="ENSP00000504134.1"/>
    <property type="RefSeq nucleotide sequence ID" value="NM_032364.6"/>
    <property type="RefSeq protein sequence ID" value="NP_115740.5"/>
</dbReference>
<dbReference type="UCSC" id="uc001shx.1">
    <property type="organism name" value="human"/>
</dbReference>
<dbReference type="AGR" id="HGNC:24581"/>
<dbReference type="CTD" id="85406"/>
<dbReference type="DisGeNET" id="85406"/>
<dbReference type="GeneCards" id="DNAJC14"/>
<dbReference type="HGNC" id="HGNC:24581">
    <property type="gene designation" value="DNAJC14"/>
</dbReference>
<dbReference type="HPA" id="ENSG00000135392">
    <property type="expression patterns" value="Low tissue specificity"/>
</dbReference>
<dbReference type="MIM" id="606092">
    <property type="type" value="gene"/>
</dbReference>
<dbReference type="neXtProt" id="NX_Q6Y2X3"/>
<dbReference type="OpenTargets" id="ENSG00000135392"/>
<dbReference type="PharmGKB" id="PA134940402"/>
<dbReference type="VEuPathDB" id="HostDB:ENSG00000135392"/>
<dbReference type="eggNOG" id="KOG0720">
    <property type="taxonomic scope" value="Eukaryota"/>
</dbReference>
<dbReference type="GeneTree" id="ENSGT00940000155637"/>
<dbReference type="HOGENOM" id="CLU_020746_0_0_1"/>
<dbReference type="InParanoid" id="Q6Y2X3"/>
<dbReference type="OMA" id="WLELPWF"/>
<dbReference type="OrthoDB" id="1507364at2759"/>
<dbReference type="PAN-GO" id="Q6Y2X3">
    <property type="GO annotations" value="1 GO annotation based on evolutionary models"/>
</dbReference>
<dbReference type="PhylomeDB" id="Q6Y2X3"/>
<dbReference type="TreeFam" id="TF105173"/>
<dbReference type="PathwayCommons" id="Q6Y2X3"/>
<dbReference type="SignaLink" id="Q6Y2X3"/>
<dbReference type="SIGNOR" id="Q6Y2X3"/>
<dbReference type="BioGRID-ORCS" id="85406">
    <property type="hits" value="13 hits in 1155 CRISPR screens"/>
</dbReference>
<dbReference type="ChiTaRS" id="DNAJC14">
    <property type="organism name" value="human"/>
</dbReference>
<dbReference type="GeneWiki" id="DNAJC14"/>
<dbReference type="GenomeRNAi" id="85406"/>
<dbReference type="Pharos" id="Q6Y2X3">
    <property type="development level" value="Tbio"/>
</dbReference>
<dbReference type="PRO" id="PR:Q6Y2X3"/>
<dbReference type="Proteomes" id="UP000005640">
    <property type="component" value="Chromosome 12"/>
</dbReference>
<dbReference type="RNAct" id="Q6Y2X3">
    <property type="molecule type" value="protein"/>
</dbReference>
<dbReference type="Bgee" id="ENSG00000135392">
    <property type="expression patterns" value="Expressed in islet of Langerhans and 147 other cell types or tissues"/>
</dbReference>
<dbReference type="ExpressionAtlas" id="Q6Y2X3">
    <property type="expression patterns" value="baseline and differential"/>
</dbReference>
<dbReference type="GO" id="GO:0005789">
    <property type="term" value="C:endoplasmic reticulum membrane"/>
    <property type="evidence" value="ECO:0007669"/>
    <property type="project" value="UniProtKB-SubCell"/>
</dbReference>
<dbReference type="GO" id="GO:0016020">
    <property type="term" value="C:membrane"/>
    <property type="evidence" value="ECO:0007005"/>
    <property type="project" value="UniProtKB"/>
</dbReference>
<dbReference type="GO" id="GO:0050780">
    <property type="term" value="F:dopamine receptor binding"/>
    <property type="evidence" value="ECO:0000318"/>
    <property type="project" value="GO_Central"/>
</dbReference>
<dbReference type="GO" id="GO:0015031">
    <property type="term" value="P:protein transport"/>
    <property type="evidence" value="ECO:0007669"/>
    <property type="project" value="UniProtKB-KW"/>
</dbReference>
<dbReference type="CDD" id="cd06257">
    <property type="entry name" value="DnaJ"/>
    <property type="match status" value="1"/>
</dbReference>
<dbReference type="FunFam" id="1.10.287.110:FF:000057">
    <property type="entry name" value="dnaJ homolog subfamily C member 14"/>
    <property type="match status" value="1"/>
</dbReference>
<dbReference type="Gene3D" id="1.10.287.110">
    <property type="entry name" value="DnaJ domain"/>
    <property type="match status" value="1"/>
</dbReference>
<dbReference type="InterPro" id="IPR001623">
    <property type="entry name" value="DnaJ_domain"/>
</dbReference>
<dbReference type="InterPro" id="IPR036869">
    <property type="entry name" value="J_dom_sf"/>
</dbReference>
<dbReference type="InterPro" id="IPR032843">
    <property type="entry name" value="Jiv"/>
</dbReference>
<dbReference type="InterPro" id="IPR052317">
    <property type="entry name" value="Viral_replicn-host_int_reg"/>
</dbReference>
<dbReference type="PANTHER" id="PTHR44665">
    <property type="entry name" value="DNAJ HOMOLOG SUBFAMILY C MEMBER 14"/>
    <property type="match status" value="1"/>
</dbReference>
<dbReference type="PANTHER" id="PTHR44665:SF1">
    <property type="entry name" value="DNAJ HOMOLOG SUBFAMILY C MEMBER 14"/>
    <property type="match status" value="1"/>
</dbReference>
<dbReference type="Pfam" id="PF00226">
    <property type="entry name" value="DnaJ"/>
    <property type="match status" value="1"/>
</dbReference>
<dbReference type="Pfam" id="PF14901">
    <property type="entry name" value="Jiv90"/>
    <property type="match status" value="1"/>
</dbReference>
<dbReference type="PRINTS" id="PR00625">
    <property type="entry name" value="JDOMAIN"/>
</dbReference>
<dbReference type="SMART" id="SM00271">
    <property type="entry name" value="DnaJ"/>
    <property type="match status" value="1"/>
</dbReference>
<dbReference type="SUPFAM" id="SSF46565">
    <property type="entry name" value="Chaperone J-domain"/>
    <property type="match status" value="1"/>
</dbReference>
<dbReference type="PROSITE" id="PS50076">
    <property type="entry name" value="DNAJ_2"/>
    <property type="match status" value="1"/>
</dbReference>
<evidence type="ECO:0000250" key="1"/>
<evidence type="ECO:0000255" key="2"/>
<evidence type="ECO:0000255" key="3">
    <source>
        <dbReference type="PROSITE-ProRule" id="PRU00286"/>
    </source>
</evidence>
<evidence type="ECO:0000256" key="4">
    <source>
        <dbReference type="SAM" id="MobiDB-lite"/>
    </source>
</evidence>
<evidence type="ECO:0000269" key="5">
    <source>
    </source>
</evidence>
<evidence type="ECO:0000305" key="6"/>
<gene>
    <name type="primary">DNAJC14</name>
    <name type="synonym">DRIP78</name>
    <name type="synonym">HDJ3</name>
</gene>
<comment type="function">
    <text evidence="1">Regulates the export of target proteins, such as DRD1, from the endoplasmic reticulum to the cell surface.</text>
</comment>
<comment type="subunit">
    <text evidence="1">Interacts with the FxxxFxxxF motif of DRD1 via its C-terminal domain.</text>
</comment>
<comment type="interaction">
    <interactant intactId="EBI-10038974">
        <id>Q6Y2X3</id>
    </interactant>
    <interactant intactId="EBI-347495">
        <id>P82979</id>
        <label>SARNP</label>
    </interactant>
    <organismsDiffer>false</organismsDiffer>
    <experiments>3</experiments>
</comment>
<comment type="subcellular location">
    <subcellularLocation>
        <location evidence="1">Endoplasmic reticulum membrane</location>
        <topology evidence="1">Multi-pass membrane protein</topology>
    </subcellularLocation>
</comment>
<comment type="tissue specificity">
    <text evidence="5">Highly expressed in pancreas and selectively expressed in brain, lung, liver, skeletal muscle and kidney.</text>
</comment>
<comment type="sequence caution" evidence="6">
    <conflict type="erroneous initiation">
        <sequence resource="EMBL-CDS" id="BAB71050"/>
    </conflict>
</comment>
<organism>
    <name type="scientific">Homo sapiens</name>
    <name type="common">Human</name>
    <dbReference type="NCBI Taxonomy" id="9606"/>
    <lineage>
        <taxon>Eukaryota</taxon>
        <taxon>Metazoa</taxon>
        <taxon>Chordata</taxon>
        <taxon>Craniata</taxon>
        <taxon>Vertebrata</taxon>
        <taxon>Euteleostomi</taxon>
        <taxon>Mammalia</taxon>
        <taxon>Eutheria</taxon>
        <taxon>Euarchontoglires</taxon>
        <taxon>Primates</taxon>
        <taxon>Haplorrhini</taxon>
        <taxon>Catarrhini</taxon>
        <taxon>Hominidae</taxon>
        <taxon>Homo</taxon>
    </lineage>
</organism>
<name>DJC14_HUMAN</name>
<accession>Q6Y2X3</accession>
<accession>A5YM67</accession>
<accession>Q17RY2</accession>
<accession>Q66K17</accession>
<accession>Q96N59</accession>
<accession>Q96T63</accession>
<sequence length="702" mass="78569">MAQKHPGERGLYGAHHSGGASLRTLGPSVDPEIPSFSGLRDSAGTAPNGTRCLTEHSGPKHTQHPNPAHWLDPSHGPPGGPGPPRDAEDPDQSETSSEEESGVDQELSKENETGNQKDGNSFLSIPSACNCQGTPGIPEGPYSEGGNGSSSNFCHHCTSPALGEDELEEEYDDEESLKFPSDFSRVSSGKKPPSRRQRHRFPTKEDTREGGRRDPRSPGRHRLGRKRSQADKRKGLGLWGAEELCQLGQAGFWWLIELLVLVGEYVETCGHLIYACRQLKSSDLDLFRVWMGVWTGRLGGWAQVMFQFLSQGFYCGVGLFTRFLKLLGALLLLALALFLGFLQLGWRFLVGLGDRLGWRDKATWLFSWLDSPALQRCLTLLRDSRPWQRLVRIVQWGWLELPWVKQNINRQGNAPVASGRYCQPEEEVARLLTMAGVPEDELNPFHVLGVEATASDVELKKAYRQLAVMVHPDKNHHPRAEEAFKVLRAAWDIVSNAEKRKEYEMKRMAENELSRSVNEFLSKLQDDLKEAMNTMMCSRCQGKHRRFEMDREPKSARYCAECNRLHPAEEGDFWAESSMLGLKITYFALMDGKVYDITEWAGCQRVGISPDTHRVPYHISFGSRIPGTRGRQRATPDAPPADLQDFLSRIFQVPPGQMPNGNFFAAPQPAPGAAAASKPNSTVPKGEAKPKRRKKVRRPFQR</sequence>